<gene>
    <name type="ordered locus">aq_aa13</name>
</gene>
<feature type="chain" id="PRO_0000186986" description="Uncharacterized protein aq_aa13">
    <location>
        <begin position="1"/>
        <end position="142"/>
    </location>
</feature>
<feature type="region of interest" description="Disordered" evidence="1">
    <location>
        <begin position="1"/>
        <end position="40"/>
    </location>
</feature>
<feature type="compositionally biased region" description="Basic residues" evidence="1">
    <location>
        <begin position="1"/>
        <end position="14"/>
    </location>
</feature>
<feature type="compositionally biased region" description="Low complexity" evidence="1">
    <location>
        <begin position="16"/>
        <end position="28"/>
    </location>
</feature>
<protein>
    <recommendedName>
        <fullName>Uncharacterized protein aq_aa13</fullName>
    </recommendedName>
</protein>
<organism>
    <name type="scientific">Aquifex aeolicus (strain VF5)</name>
    <dbReference type="NCBI Taxonomy" id="224324"/>
    <lineage>
        <taxon>Bacteria</taxon>
        <taxon>Pseudomonadati</taxon>
        <taxon>Aquificota</taxon>
        <taxon>Aquificia</taxon>
        <taxon>Aquificales</taxon>
        <taxon>Aquificaceae</taxon>
        <taxon>Aquifex</taxon>
    </lineage>
</organism>
<sequence>MKNVSPRRNKHYKSYKPQVPLKKPVLLPQHPPYRNRRKKKYQQNKYFPDFTFLLSYPVIKIRKVALKKLQKLPHKNDFNLANSLQNCQLGQNATNLILLLLFSLDHYTPLILNLAFSLTDFSKSSNCFINLSKVYPPLKPFP</sequence>
<reference key="1">
    <citation type="journal article" date="1998" name="Nature">
        <title>The complete genome of the hyperthermophilic bacterium Aquifex aeolicus.</title>
        <authorList>
            <person name="Deckert G."/>
            <person name="Warren P.V."/>
            <person name="Gaasterland T."/>
            <person name="Young W.G."/>
            <person name="Lenox A.L."/>
            <person name="Graham D.E."/>
            <person name="Overbeek R."/>
            <person name="Snead M.A."/>
            <person name="Keller M."/>
            <person name="Aujay M."/>
            <person name="Huber R."/>
            <person name="Feldman R.A."/>
            <person name="Short J.M."/>
            <person name="Olsen G.J."/>
            <person name="Swanson R.V."/>
        </authorList>
    </citation>
    <scope>NUCLEOTIDE SEQUENCE [LARGE SCALE GENOMIC DNA]</scope>
    <source>
        <strain>VF5</strain>
    </source>
</reference>
<dbReference type="EMBL" id="AE000667">
    <property type="protein sequence ID" value="AAC07958.1"/>
    <property type="molecule type" value="Genomic_DNA"/>
</dbReference>
<dbReference type="SMR" id="O66406"/>
<dbReference type="EnsemblBacteria" id="AAC07958">
    <property type="protein sequence ID" value="AAC07958"/>
    <property type="gene ID" value="aq_aa13"/>
</dbReference>
<dbReference type="HOGENOM" id="CLU_1811791_0_0_0"/>
<dbReference type="InParanoid" id="O66406"/>
<dbReference type="Proteomes" id="UP000000798">
    <property type="component" value="Plasmid ece1"/>
</dbReference>
<name>YZ13_AQUAE</name>
<accession>O66406</accession>
<evidence type="ECO:0000256" key="1">
    <source>
        <dbReference type="SAM" id="MobiDB-lite"/>
    </source>
</evidence>
<proteinExistence type="predicted"/>
<keyword id="KW-0614">Plasmid</keyword>
<keyword id="KW-1185">Reference proteome</keyword>
<geneLocation type="plasmid">
    <name>ece1</name>
</geneLocation>